<reference evidence="7 8" key="1">
    <citation type="journal article" date="2005" name="Dev. Cell">
        <title>Groucho-associated transcriptional repressor ripply1 is required for proper transition from the presomitic mesoderm to somites.</title>
        <authorList>
            <person name="Kawamura A."/>
            <person name="Koshida S."/>
            <person name="Hijikata H."/>
            <person name="Ohbayashi A."/>
            <person name="Kondoh H."/>
            <person name="Takada S."/>
        </authorList>
    </citation>
    <scope>NUCLEOTIDE SEQUENCE [MRNA]</scope>
    <scope>TISSUE SPECIFICITY</scope>
    <source>
        <tissue evidence="6">Embryo</tissue>
    </source>
</reference>
<reference key="2">
    <citation type="journal article" date="2013" name="Nature">
        <title>The zebrafish reference genome sequence and its relationship to the human genome.</title>
        <authorList>
            <person name="Howe K."/>
            <person name="Clark M.D."/>
            <person name="Torroja C.F."/>
            <person name="Torrance J."/>
            <person name="Berthelot C."/>
            <person name="Muffato M."/>
            <person name="Collins J.E."/>
            <person name="Humphray S."/>
            <person name="McLaren K."/>
            <person name="Matthews L."/>
            <person name="McLaren S."/>
            <person name="Sealy I."/>
            <person name="Caccamo M."/>
            <person name="Churcher C."/>
            <person name="Scott C."/>
            <person name="Barrett J.C."/>
            <person name="Koch R."/>
            <person name="Rauch G.J."/>
            <person name="White S."/>
            <person name="Chow W."/>
            <person name="Kilian B."/>
            <person name="Quintais L.T."/>
            <person name="Guerra-Assuncao J.A."/>
            <person name="Zhou Y."/>
            <person name="Gu Y."/>
            <person name="Yen J."/>
            <person name="Vogel J.H."/>
            <person name="Eyre T."/>
            <person name="Redmond S."/>
            <person name="Banerjee R."/>
            <person name="Chi J."/>
            <person name="Fu B."/>
            <person name="Langley E."/>
            <person name="Maguire S.F."/>
            <person name="Laird G.K."/>
            <person name="Lloyd D."/>
            <person name="Kenyon E."/>
            <person name="Donaldson S."/>
            <person name="Sehra H."/>
            <person name="Almeida-King J."/>
            <person name="Loveland J."/>
            <person name="Trevanion S."/>
            <person name="Jones M."/>
            <person name="Quail M."/>
            <person name="Willey D."/>
            <person name="Hunt A."/>
            <person name="Burton J."/>
            <person name="Sims S."/>
            <person name="McLay K."/>
            <person name="Plumb B."/>
            <person name="Davis J."/>
            <person name="Clee C."/>
            <person name="Oliver K."/>
            <person name="Clark R."/>
            <person name="Riddle C."/>
            <person name="Elliot D."/>
            <person name="Threadgold G."/>
            <person name="Harden G."/>
            <person name="Ware D."/>
            <person name="Begum S."/>
            <person name="Mortimore B."/>
            <person name="Kerry G."/>
            <person name="Heath P."/>
            <person name="Phillimore B."/>
            <person name="Tracey A."/>
            <person name="Corby N."/>
            <person name="Dunn M."/>
            <person name="Johnson C."/>
            <person name="Wood J."/>
            <person name="Clark S."/>
            <person name="Pelan S."/>
            <person name="Griffiths G."/>
            <person name="Smith M."/>
            <person name="Glithero R."/>
            <person name="Howden P."/>
            <person name="Barker N."/>
            <person name="Lloyd C."/>
            <person name="Stevens C."/>
            <person name="Harley J."/>
            <person name="Holt K."/>
            <person name="Panagiotidis G."/>
            <person name="Lovell J."/>
            <person name="Beasley H."/>
            <person name="Henderson C."/>
            <person name="Gordon D."/>
            <person name="Auger K."/>
            <person name="Wright D."/>
            <person name="Collins J."/>
            <person name="Raisen C."/>
            <person name="Dyer L."/>
            <person name="Leung K."/>
            <person name="Robertson L."/>
            <person name="Ambridge K."/>
            <person name="Leongamornlert D."/>
            <person name="McGuire S."/>
            <person name="Gilderthorp R."/>
            <person name="Griffiths C."/>
            <person name="Manthravadi D."/>
            <person name="Nichol S."/>
            <person name="Barker G."/>
            <person name="Whitehead S."/>
            <person name="Kay M."/>
            <person name="Brown J."/>
            <person name="Murnane C."/>
            <person name="Gray E."/>
            <person name="Humphries M."/>
            <person name="Sycamore N."/>
            <person name="Barker D."/>
            <person name="Saunders D."/>
            <person name="Wallis J."/>
            <person name="Babbage A."/>
            <person name="Hammond S."/>
            <person name="Mashreghi-Mohammadi M."/>
            <person name="Barr L."/>
            <person name="Martin S."/>
            <person name="Wray P."/>
            <person name="Ellington A."/>
            <person name="Matthews N."/>
            <person name="Ellwood M."/>
            <person name="Woodmansey R."/>
            <person name="Clark G."/>
            <person name="Cooper J."/>
            <person name="Tromans A."/>
            <person name="Grafham D."/>
            <person name="Skuce C."/>
            <person name="Pandian R."/>
            <person name="Andrews R."/>
            <person name="Harrison E."/>
            <person name="Kimberley A."/>
            <person name="Garnett J."/>
            <person name="Fosker N."/>
            <person name="Hall R."/>
            <person name="Garner P."/>
            <person name="Kelly D."/>
            <person name="Bird C."/>
            <person name="Palmer S."/>
            <person name="Gehring I."/>
            <person name="Berger A."/>
            <person name="Dooley C.M."/>
            <person name="Ersan-Urun Z."/>
            <person name="Eser C."/>
            <person name="Geiger H."/>
            <person name="Geisler M."/>
            <person name="Karotki L."/>
            <person name="Kirn A."/>
            <person name="Konantz J."/>
            <person name="Konantz M."/>
            <person name="Oberlander M."/>
            <person name="Rudolph-Geiger S."/>
            <person name="Teucke M."/>
            <person name="Lanz C."/>
            <person name="Raddatz G."/>
            <person name="Osoegawa K."/>
            <person name="Zhu B."/>
            <person name="Rapp A."/>
            <person name="Widaa S."/>
            <person name="Langford C."/>
            <person name="Yang F."/>
            <person name="Schuster S.C."/>
            <person name="Carter N.P."/>
            <person name="Harrow J."/>
            <person name="Ning Z."/>
            <person name="Herrero J."/>
            <person name="Searle S.M."/>
            <person name="Enright A."/>
            <person name="Geisler R."/>
            <person name="Plasterk R.H."/>
            <person name="Lee C."/>
            <person name="Westerfield M."/>
            <person name="de Jong P.J."/>
            <person name="Zon L.I."/>
            <person name="Postlethwait J.H."/>
            <person name="Nusslein-Volhard C."/>
            <person name="Hubbard T.J."/>
            <person name="Roest Crollius H."/>
            <person name="Rogers J."/>
            <person name="Stemple D.L."/>
        </authorList>
    </citation>
    <scope>NUCLEOTIDE SEQUENCE [LARGE SCALE GENOMIC DNA]</scope>
    <source>
        <strain>Tuebingen</strain>
    </source>
</reference>
<comment type="function">
    <text evidence="2">Plays a role in somitogenesis. Required for somite segregation and establishment of rostrocaudal polarity in somites (By similarity).</text>
</comment>
<comment type="subcellular location">
    <subcellularLocation>
        <location evidence="3">Nucleus</location>
    </subcellularLocation>
</comment>
<comment type="tissue specificity">
    <text evidence="6">First expressed in the paraxial mesoderm at the 90% epiboly stage, and subsequently confined to the presomitic mesoderm. Expressed in the rostral compartment of S-I and S-II.</text>
</comment>
<comment type="domain">
    <text evidence="1">The ripply homology domain is required for transcriptional repression.</text>
</comment>
<comment type="domain">
    <text evidence="3">The WRPW motif is required for binding to tle/groucho proteins.</text>
</comment>
<comment type="similarity">
    <text evidence="7">Belongs to the ripply family.</text>
</comment>
<sequence length="109" mass="13070">MENITFTSGLNSEMDANQPWRPWLSQTSRKAPDYKPYKRPADDEQHKLSIFKHPVKLFWPKSQCFDYLYEDAEVLLRNYPVQATICLYEDPDTEDEEDYSDEEDEKELR</sequence>
<organism>
    <name type="scientific">Danio rerio</name>
    <name type="common">Zebrafish</name>
    <name type="synonym">Brachydanio rerio</name>
    <dbReference type="NCBI Taxonomy" id="7955"/>
    <lineage>
        <taxon>Eukaryota</taxon>
        <taxon>Metazoa</taxon>
        <taxon>Chordata</taxon>
        <taxon>Craniata</taxon>
        <taxon>Vertebrata</taxon>
        <taxon>Euteleostomi</taxon>
        <taxon>Actinopterygii</taxon>
        <taxon>Neopterygii</taxon>
        <taxon>Teleostei</taxon>
        <taxon>Ostariophysi</taxon>
        <taxon>Cypriniformes</taxon>
        <taxon>Danionidae</taxon>
        <taxon>Danioninae</taxon>
        <taxon>Danio</taxon>
    </lineage>
</organism>
<feature type="chain" id="PRO_0000307761" description="Protein ripply2">
    <location>
        <begin position="1"/>
        <end position="109"/>
    </location>
</feature>
<feature type="region of interest" description="Disordered" evidence="5">
    <location>
        <begin position="1"/>
        <end position="42"/>
    </location>
</feature>
<feature type="region of interest" description="Ripply homology domain" evidence="4">
    <location>
        <begin position="53"/>
        <end position="88"/>
    </location>
</feature>
<feature type="region of interest" description="Disordered" evidence="5">
    <location>
        <begin position="88"/>
        <end position="109"/>
    </location>
</feature>
<feature type="short sequence motif" description="WRPW motif" evidence="4">
    <location>
        <begin position="20"/>
        <end position="23"/>
    </location>
</feature>
<feature type="compositionally biased region" description="Polar residues" evidence="5">
    <location>
        <begin position="1"/>
        <end position="15"/>
    </location>
</feature>
<feature type="compositionally biased region" description="Basic and acidic residues" evidence="5">
    <location>
        <begin position="30"/>
        <end position="42"/>
    </location>
</feature>
<feature type="compositionally biased region" description="Acidic residues" evidence="5">
    <location>
        <begin position="89"/>
        <end position="109"/>
    </location>
</feature>
<feature type="sequence conflict" description="In Ref. 1; BAE53717." evidence="7" ref="1">
    <original>A</original>
    <variation>V</variation>
    <location>
        <position position="41"/>
    </location>
</feature>
<evidence type="ECO:0000250" key="1"/>
<evidence type="ECO:0000250" key="2">
    <source>
        <dbReference type="UniProtKB" id="Q2WG76"/>
    </source>
</evidence>
<evidence type="ECO:0000250" key="3">
    <source>
        <dbReference type="UniProtKB" id="Q2WG80"/>
    </source>
</evidence>
<evidence type="ECO:0000255" key="4"/>
<evidence type="ECO:0000256" key="5">
    <source>
        <dbReference type="SAM" id="MobiDB-lite"/>
    </source>
</evidence>
<evidence type="ECO:0000269" key="6">
    <source>
    </source>
</evidence>
<evidence type="ECO:0000305" key="7"/>
<evidence type="ECO:0000312" key="8">
    <source>
        <dbReference type="EMBL" id="BAE53717.1"/>
    </source>
</evidence>
<evidence type="ECO:0000312" key="9">
    <source>
        <dbReference type="ZFIN" id="ZDB-GENE-060113-2"/>
    </source>
</evidence>
<keyword id="KW-0217">Developmental protein</keyword>
<keyword id="KW-0539">Nucleus</keyword>
<keyword id="KW-1185">Reference proteome</keyword>
<proteinExistence type="evidence at transcript level"/>
<protein>
    <recommendedName>
        <fullName>Protein ripply2</fullName>
    </recommendedName>
</protein>
<name>RIPP2_DANRE</name>
<dbReference type="EMBL" id="AB212220">
    <property type="protein sequence ID" value="BAE53717.1"/>
    <property type="molecule type" value="mRNA"/>
</dbReference>
<dbReference type="EMBL" id="BX649468">
    <property type="protein sequence ID" value="CAM13289.1"/>
    <property type="molecule type" value="Genomic_DNA"/>
</dbReference>
<dbReference type="RefSeq" id="NP_001034198.1">
    <property type="nucleotide sequence ID" value="NM_001039109.1"/>
</dbReference>
<dbReference type="STRING" id="7955.ENSDARP00000094407"/>
<dbReference type="PaxDb" id="7955-ENSDARP00000094407"/>
<dbReference type="ABCD" id="Q2WG79">
    <property type="antibodies" value="3 sequenced antibodies"/>
</dbReference>
<dbReference type="Ensembl" id="ENSDART00000103631">
    <property type="protein sequence ID" value="ENSDARP00000094407"/>
    <property type="gene ID" value="ENSDARG00000070535"/>
</dbReference>
<dbReference type="GeneID" id="654447"/>
<dbReference type="KEGG" id="dre:654447"/>
<dbReference type="AGR" id="ZFIN:ZDB-GENE-060113-2"/>
<dbReference type="CTD" id="134701"/>
<dbReference type="ZFIN" id="ZDB-GENE-060113-2">
    <property type="gene designation" value="ripply2"/>
</dbReference>
<dbReference type="eggNOG" id="ENOG502S6U6">
    <property type="taxonomic scope" value="Eukaryota"/>
</dbReference>
<dbReference type="HOGENOM" id="CLU_117697_2_0_1"/>
<dbReference type="InParanoid" id="Q2WG79"/>
<dbReference type="OMA" id="WHDAPRT"/>
<dbReference type="OrthoDB" id="5978888at2759"/>
<dbReference type="PhylomeDB" id="Q2WG79"/>
<dbReference type="TreeFam" id="TF336045"/>
<dbReference type="PRO" id="PR:Q2WG79"/>
<dbReference type="Proteomes" id="UP000000437">
    <property type="component" value="Chromosome 4"/>
</dbReference>
<dbReference type="Bgee" id="ENSDARG00000070535">
    <property type="expression patterns" value="Expressed in testis and 18 other cell types or tissues"/>
</dbReference>
<dbReference type="ExpressionAtlas" id="Q2WG79">
    <property type="expression patterns" value="baseline"/>
</dbReference>
<dbReference type="GO" id="GO:0005634">
    <property type="term" value="C:nucleus"/>
    <property type="evidence" value="ECO:0000250"/>
    <property type="project" value="UniProtKB"/>
</dbReference>
<dbReference type="GO" id="GO:0009880">
    <property type="term" value="P:embryonic pattern specification"/>
    <property type="evidence" value="ECO:0000318"/>
    <property type="project" value="GO_Central"/>
</dbReference>
<dbReference type="GO" id="GO:0000122">
    <property type="term" value="P:negative regulation of transcription by RNA polymerase II"/>
    <property type="evidence" value="ECO:0000318"/>
    <property type="project" value="GO_Central"/>
</dbReference>
<dbReference type="GO" id="GO:0032525">
    <property type="term" value="P:somite rostral/caudal axis specification"/>
    <property type="evidence" value="ECO:0000250"/>
    <property type="project" value="UniProtKB"/>
</dbReference>
<dbReference type="GO" id="GO:0001756">
    <property type="term" value="P:somitogenesis"/>
    <property type="evidence" value="ECO:0000250"/>
    <property type="project" value="UniProtKB"/>
</dbReference>
<dbReference type="InterPro" id="IPR028127">
    <property type="entry name" value="Ripply_fam"/>
</dbReference>
<dbReference type="PANTHER" id="PTHR16770">
    <property type="entry name" value="PROTEIN RIPPLY-LIKE"/>
    <property type="match status" value="1"/>
</dbReference>
<dbReference type="PANTHER" id="PTHR16770:SF3">
    <property type="entry name" value="PROTEIN RIPPLY2"/>
    <property type="match status" value="1"/>
</dbReference>
<dbReference type="Pfam" id="PF14998">
    <property type="entry name" value="Ripply"/>
    <property type="match status" value="1"/>
</dbReference>
<accession>Q2WG79</accession>
<accession>A2BHT0</accession>
<gene>
    <name evidence="9" type="primary">ripply2</name>
    <name type="ORF">si:ch211-152c2.8</name>
</gene>